<organism>
    <name type="scientific">Caenorhabditis elegans</name>
    <dbReference type="NCBI Taxonomy" id="6239"/>
    <lineage>
        <taxon>Eukaryota</taxon>
        <taxon>Metazoa</taxon>
        <taxon>Ecdysozoa</taxon>
        <taxon>Nematoda</taxon>
        <taxon>Chromadorea</taxon>
        <taxon>Rhabditida</taxon>
        <taxon>Rhabditina</taxon>
        <taxon>Rhabditomorpha</taxon>
        <taxon>Rhabditoidea</taxon>
        <taxon>Rhabditidae</taxon>
        <taxon>Peloderinae</taxon>
        <taxon>Caenorhabditis</taxon>
    </lineage>
</organism>
<dbReference type="EMBL" id="FO080593">
    <property type="protein sequence ID" value="CCD64961.1"/>
    <property type="molecule type" value="Genomic_DNA"/>
</dbReference>
<dbReference type="EMBL" id="FO080593">
    <property type="protein sequence ID" value="CCD64962.1"/>
    <property type="molecule type" value="Genomic_DNA"/>
</dbReference>
<dbReference type="RefSeq" id="NP_001293503.1">
    <molecule id="Q95QW0-1"/>
    <property type="nucleotide sequence ID" value="NM_001306574.2"/>
</dbReference>
<dbReference type="RefSeq" id="NP_001293504.1">
    <molecule id="Q95QW0-2"/>
    <property type="nucleotide sequence ID" value="NM_001306575.4"/>
</dbReference>
<dbReference type="SMR" id="Q95QW0"/>
<dbReference type="DIP" id="DIP-25447N"/>
<dbReference type="FunCoup" id="Q95QW0">
    <property type="interactions" value="2584"/>
</dbReference>
<dbReference type="IntAct" id="Q95QW0">
    <property type="interactions" value="1"/>
</dbReference>
<dbReference type="STRING" id="6239.C17G10.9e.1"/>
<dbReference type="PaxDb" id="6239-C17G10.9a"/>
<dbReference type="PeptideAtlas" id="Q95QW0"/>
<dbReference type="EnsemblMetazoa" id="C17G10.9a.1">
    <molecule id="Q95QW0-1"/>
    <property type="protein sequence ID" value="C17G10.9a.1"/>
    <property type="gene ID" value="WBGene00015920"/>
</dbReference>
<dbReference type="EnsemblMetazoa" id="C17G10.9b.1">
    <molecule id="Q95QW0-2"/>
    <property type="protein sequence ID" value="C17G10.9b.1"/>
    <property type="gene ID" value="WBGene00015920"/>
</dbReference>
<dbReference type="GeneID" id="24104220"/>
<dbReference type="KEGG" id="cel:CELE_C17G10.9"/>
<dbReference type="UCSC" id="C17G10.9a.1">
    <property type="organism name" value="c. elegans"/>
</dbReference>
<dbReference type="AGR" id="WB:WBGene00015920"/>
<dbReference type="CTD" id="24104220"/>
<dbReference type="WormBase" id="C17G10.9a">
    <molecule id="Q95QW0-1"/>
    <property type="protein sequence ID" value="CE27702"/>
    <property type="gene ID" value="WBGene00015920"/>
    <property type="gene designation" value="eif-3.L"/>
</dbReference>
<dbReference type="WormBase" id="C17G10.9b">
    <molecule id="Q95QW0-2"/>
    <property type="protein sequence ID" value="CE30870"/>
    <property type="gene ID" value="WBGene00015920"/>
    <property type="gene designation" value="eif-3.L"/>
</dbReference>
<dbReference type="eggNOG" id="KOG3677">
    <property type="taxonomic scope" value="Eukaryota"/>
</dbReference>
<dbReference type="GeneTree" id="ENSGT00390000000411"/>
<dbReference type="InParanoid" id="Q95QW0"/>
<dbReference type="OMA" id="AGWFIRN"/>
<dbReference type="OrthoDB" id="15082at2759"/>
<dbReference type="PhylomeDB" id="Q95QW0"/>
<dbReference type="Reactome" id="R-CEL-156827">
    <property type="pathway name" value="L13a-mediated translational silencing of Ceruloplasmin expression"/>
</dbReference>
<dbReference type="Reactome" id="R-CEL-72649">
    <property type="pathway name" value="Translation initiation complex formation"/>
</dbReference>
<dbReference type="Reactome" id="R-CEL-72689">
    <property type="pathway name" value="Formation of a pool of free 40S subunits"/>
</dbReference>
<dbReference type="Reactome" id="R-CEL-72695">
    <property type="pathway name" value="Formation of the ternary complex, and subsequently, the 43S complex"/>
</dbReference>
<dbReference type="Reactome" id="R-CEL-72702">
    <property type="pathway name" value="Ribosomal scanning and start codon recognition"/>
</dbReference>
<dbReference type="PRO" id="PR:Q95QW0"/>
<dbReference type="Proteomes" id="UP000001940">
    <property type="component" value="Chromosome II"/>
</dbReference>
<dbReference type="Bgee" id="WBGene00015920">
    <property type="expression patterns" value="Expressed in germ line (C elegans) and 4 other cell types or tissues"/>
</dbReference>
<dbReference type="ExpressionAtlas" id="Q95QW0">
    <property type="expression patterns" value="baseline and differential"/>
</dbReference>
<dbReference type="GO" id="GO:0016282">
    <property type="term" value="C:eukaryotic 43S preinitiation complex"/>
    <property type="evidence" value="ECO:0007669"/>
    <property type="project" value="UniProtKB-UniRule"/>
</dbReference>
<dbReference type="GO" id="GO:0033290">
    <property type="term" value="C:eukaryotic 48S preinitiation complex"/>
    <property type="evidence" value="ECO:0007669"/>
    <property type="project" value="UniProtKB-UniRule"/>
</dbReference>
<dbReference type="GO" id="GO:0005852">
    <property type="term" value="C:eukaryotic translation initiation factor 3 complex"/>
    <property type="evidence" value="ECO:0000318"/>
    <property type="project" value="GO_Central"/>
</dbReference>
<dbReference type="GO" id="GO:0003743">
    <property type="term" value="F:translation initiation factor activity"/>
    <property type="evidence" value="ECO:0007669"/>
    <property type="project" value="UniProtKB-UniRule"/>
</dbReference>
<dbReference type="GO" id="GO:0001732">
    <property type="term" value="P:formation of cytoplasmic translation initiation complex"/>
    <property type="evidence" value="ECO:0007669"/>
    <property type="project" value="UniProtKB-UniRule"/>
</dbReference>
<dbReference type="GO" id="GO:0006413">
    <property type="term" value="P:translational initiation"/>
    <property type="evidence" value="ECO:0000318"/>
    <property type="project" value="GO_Central"/>
</dbReference>
<dbReference type="HAMAP" id="MF_03011">
    <property type="entry name" value="eIF3l"/>
    <property type="match status" value="1"/>
</dbReference>
<dbReference type="InterPro" id="IPR019382">
    <property type="entry name" value="eIF3l"/>
</dbReference>
<dbReference type="InterPro" id="IPR000717">
    <property type="entry name" value="PCI_dom"/>
</dbReference>
<dbReference type="PANTHER" id="PTHR13242">
    <property type="entry name" value="EUKARYOTIC TRANSLATION INITIATION FACTOR 3"/>
    <property type="match status" value="1"/>
</dbReference>
<dbReference type="PANTHER" id="PTHR13242:SF0">
    <property type="entry name" value="EUKARYOTIC TRANSLATION INITIATION FACTOR 3 SUBUNIT L"/>
    <property type="match status" value="1"/>
</dbReference>
<dbReference type="Pfam" id="PF10255">
    <property type="entry name" value="Paf67"/>
    <property type="match status" value="1"/>
</dbReference>
<dbReference type="PROSITE" id="PS50250">
    <property type="entry name" value="PCI"/>
    <property type="match status" value="1"/>
</dbReference>
<evidence type="ECO:0000255" key="1">
    <source>
        <dbReference type="HAMAP-Rule" id="MF_03011"/>
    </source>
</evidence>
<evidence type="ECO:0000255" key="2">
    <source>
        <dbReference type="PROSITE-ProRule" id="PRU01185"/>
    </source>
</evidence>
<evidence type="ECO:0000256" key="3">
    <source>
        <dbReference type="SAM" id="MobiDB-lite"/>
    </source>
</evidence>
<evidence type="ECO:0000305" key="4"/>
<evidence type="ECO:0000312" key="5">
    <source>
        <dbReference type="WormBase" id="C17G10.9a"/>
    </source>
</evidence>
<evidence type="ECO:0000312" key="6">
    <source>
        <dbReference type="WormBase" id="C17G10.9b"/>
    </source>
</evidence>
<protein>
    <recommendedName>
        <fullName evidence="1">Eukaryotic translation initiation factor 3 subunit L</fullName>
        <shortName evidence="1">eIF3l</shortName>
    </recommendedName>
</protein>
<keyword id="KW-0025">Alternative splicing</keyword>
<keyword id="KW-0963">Cytoplasm</keyword>
<keyword id="KW-0396">Initiation factor</keyword>
<keyword id="KW-0648">Protein biosynthesis</keyword>
<keyword id="KW-1185">Reference proteome</keyword>
<proteinExistence type="inferred from homology"/>
<comment type="function">
    <text evidence="1">Component of the eukaryotic translation initiation factor 3 (eIF-3) complex, which is involved in protein synthesis of a specialized repertoire of mRNAs and, together with other initiation factors, stimulates binding of mRNA and methionyl-tRNAi to the 40S ribosome. The eIF-3 complex specifically targets and initiates translation of a subset of mRNAs involved in cell proliferation.</text>
</comment>
<comment type="subunit">
    <text evidence="1">Component of the eukaryotic translation initiation factor 3 (eIF-3) complex.</text>
</comment>
<comment type="subcellular location">
    <subcellularLocation>
        <location evidence="1">Cytoplasm</location>
    </subcellularLocation>
</comment>
<comment type="alternative products">
    <event type="alternative splicing"/>
    <isoform>
        <id>Q95QW0-1</id>
        <name evidence="5">a</name>
        <sequence type="displayed"/>
    </isoform>
    <isoform>
        <id>Q95QW0-2</id>
        <name evidence="6">b</name>
        <sequence type="described" ref="VSP_036437"/>
    </isoform>
</comment>
<comment type="similarity">
    <text evidence="1">Belongs to the eIF-3 subunit L family.</text>
</comment>
<gene>
    <name evidence="1" type="primary">eif-3.L</name>
    <name evidence="5" type="ORF">C17G10.9</name>
</gene>
<sequence length="537" mass="62476">MSRRVEFDLSTEDHSDRRRTNTFSSSADEDGVPNEVADYLVYFSRMVDEQNVPEILTLYDQAFPDLTERFFRDRMWPDENVVERIIGPGNKLFIILYKELYYRQLYARNTRGPLLVHRYESFMNYQELFSELLSSKDPIPLSLPNVWLWDIIDEFVYQFQAFCLYKANPGKRNADEVEDLINIEENQNAWNIYPVLNILYSLLSKSQIVEQLKALKEKRNPDSVADEFGQSDLYFKLGYFALIGLLRTHVLLGDYHQALKTVQYVDIDPKGIYNTVPTCLVTLHYFVGFSHLMMRNYGEATKMFVNCLLYIQRTKSVQNQQPSKKNFQYDVIGKTWDQLFHLLAICLAIQPQRIDESIASQLSERCGERMMHMANGNIDEFRNAFATGCPKFLSPTTVVYEGVNQSKEPLLRQTQSFLEGIESQMALPVLRGYLKLYTTLPTKKLASFMDVDDEHYDSFIGKLLTYKMIVNELGKEAGPSSADDDEPQTDIDFYVDRDMINIADTKVARHVGEHFIRHIQKLQEVQDVLKRLDIQKP</sequence>
<reference key="1">
    <citation type="journal article" date="1998" name="Science">
        <title>Genome sequence of the nematode C. elegans: a platform for investigating biology.</title>
        <authorList>
            <consortium name="The C. elegans sequencing consortium"/>
        </authorList>
    </citation>
    <scope>NUCLEOTIDE SEQUENCE [LARGE SCALE GENOMIC DNA]</scope>
    <scope>ALTERNATIVE SPLICING</scope>
    <source>
        <strain>Bristol N2</strain>
    </source>
</reference>
<feature type="chain" id="PRO_0000364238" description="Eukaryotic translation initiation factor 3 subunit L">
    <location>
        <begin position="1"/>
        <end position="537"/>
    </location>
</feature>
<feature type="domain" description="PCI" evidence="2">
    <location>
        <begin position="299"/>
        <end position="487"/>
    </location>
</feature>
<feature type="region of interest" description="Disordered" evidence="3">
    <location>
        <begin position="1"/>
        <end position="30"/>
    </location>
</feature>
<feature type="compositionally biased region" description="Basic and acidic residues" evidence="3">
    <location>
        <begin position="1"/>
        <end position="19"/>
    </location>
</feature>
<feature type="splice variant" id="VSP_036437" description="In isoform b." evidence="4">
    <location>
        <begin position="26"/>
        <end position="27"/>
    </location>
</feature>
<accession>Q95QW0</accession>
<accession>Q8MQD4</accession>
<name>EIF3L_CAEEL</name>